<accession>Q96FE7</accession>
<accession>B4DRR9</accession>
<accession>D1MEI0</accession>
<accession>O00318</accession>
<accession>Q49A94</accession>
<accession>Q86YW2</accession>
<accession>Q8NCJ9</accession>
<sequence>MLLAWVQAFLVSNMLLAEAYGSGGCFWDNGHLYREDQTSPAPGLRCLNWLDAQSGLASAPVSGAGNHSYCRNPDEDPRGPWCYVSGEAGVPEKRPCEDLRCPETTSQALPAFTTEIQEASEGPGADEVQVFAPANALPARSEAAAVQPVIGISQRVRMNSKEKKDLGTLGYVLGITMMVIIIAIGAGIILGYSYKRGKDLKEQHDQKVCEREMQRITLPLSAFTNPTCEIVDEKTVVVHTSQTPVDPQEGTTPLMGQAGTPGA</sequence>
<proteinExistence type="evidence at protein level"/>
<comment type="function">
    <text evidence="1">Negative regulator of hepatic phosphatidylinositol 3-kinase (PI3K) activity.</text>
</comment>
<comment type="interaction">
    <interactant intactId="EBI-10285708">
        <id>Q96FE7</id>
    </interactant>
    <interactant intactId="EBI-739552">
        <id>P43364</id>
        <label>MAGEA11</label>
    </interactant>
    <organismsDiffer>false</organismsDiffer>
    <experiments>3</experiments>
</comment>
<comment type="interaction">
    <interactant intactId="EBI-10285708">
        <id>Q96FE7</id>
    </interactant>
    <interactant intactId="EBI-17633886">
        <id>O43934</id>
        <label>MFSD11</label>
    </interactant>
    <organismsDiffer>false</organismsDiffer>
    <experiments>3</experiments>
</comment>
<comment type="interaction">
    <interactant intactId="EBI-10285708">
        <id>Q96FE7</id>
    </interactant>
    <interactant intactId="EBI-12870360">
        <id>P78382</id>
        <label>SLC35A1</label>
    </interactant>
    <organismsDiffer>false</organismsDiffer>
    <experiments>3</experiments>
</comment>
<comment type="interaction">
    <interactant intactId="EBI-10285708">
        <id>Q96FE7</id>
    </interactant>
    <interactant intactId="EBI-10173151">
        <id>A2RU14</id>
        <label>TMEM218</label>
    </interactant>
    <organismsDiffer>false</organismsDiffer>
    <experiments>3</experiments>
</comment>
<comment type="interaction">
    <interactant intactId="EBI-10285708">
        <id>Q96FE7</id>
    </interactant>
    <interactant intactId="EBI-741480">
        <id>Q9UMX0</id>
        <label>UBQLN1</label>
    </interactant>
    <organismsDiffer>false</organismsDiffer>
    <experiments>3</experiments>
</comment>
<comment type="interaction">
    <interactant intactId="EBI-10285708">
        <id>Q96FE7</id>
    </interactant>
    <interactant intactId="EBI-10173939">
        <id>Q9UMX0-2</id>
        <label>UBQLN1</label>
    </interactant>
    <organismsDiffer>false</organismsDiffer>
    <experiments>3</experiments>
</comment>
<comment type="interaction">
    <interactant intactId="EBI-10285708">
        <id>Q96FE7</id>
    </interactant>
    <interactant intactId="EBI-947187">
        <id>Q9UHD9</id>
        <label>UBQLN2</label>
    </interactant>
    <organismsDiffer>false</organismsDiffer>
    <experiments>3</experiments>
</comment>
<comment type="interaction">
    <interactant intactId="EBI-10285708">
        <id>Q96FE7</id>
    </interactant>
    <interactant intactId="EBI-12237619">
        <id>O75841</id>
        <label>UPK1B</label>
    </interactant>
    <organismsDiffer>false</organismsDiffer>
    <experiments>3</experiments>
</comment>
<comment type="subcellular location">
    <subcellularLocation>
        <location evidence="8">Cell membrane</location>
        <topology evidence="2">Single-pass type I membrane protein</topology>
    </subcellularLocation>
</comment>
<comment type="alternative products">
    <event type="alternative splicing"/>
    <isoform>
        <id>Q96FE7-1</id>
        <name>1</name>
        <name>HGFL(L)</name>
        <sequence type="displayed"/>
    </isoform>
    <isoform>
        <id>Q96FE7-2</id>
        <name>2</name>
        <name>HGFL(S)</name>
        <sequence type="described" ref="VSP_023639 VSP_023640"/>
    </isoform>
    <isoform>
        <id>Q96FE7-3</id>
        <name>3</name>
        <sequence type="described" ref="VSP_023638"/>
    </isoform>
    <isoform>
        <id>Q96FE7-4</id>
        <name>4</name>
        <sequence type="described" ref="VSP_043368"/>
    </isoform>
    <isoform>
        <id>Q96FE7-5</id>
        <name>5</name>
        <name>PIK3IP1-v1</name>
        <sequence type="described" ref="VSP_053370"/>
    </isoform>
</comment>
<comment type="PTM">
    <text evidence="9">N- and O-glycosylated. O-glycosylated with core 1 or possibly core 8 glycans. N-glycan heterogeneity at Asn-66: dHex1Hex5HexNAc4 (major) and dHex1Hex6HexNAc5 (minor).</text>
</comment>
<name>P3IP1_HUMAN</name>
<evidence type="ECO:0000250" key="1">
    <source>
        <dbReference type="UniProtKB" id="Q7TMJ8"/>
    </source>
</evidence>
<evidence type="ECO:0000255" key="2"/>
<evidence type="ECO:0000255" key="3">
    <source>
        <dbReference type="PROSITE-ProRule" id="PRU00121"/>
    </source>
</evidence>
<evidence type="ECO:0000256" key="4">
    <source>
        <dbReference type="SAM" id="MobiDB-lite"/>
    </source>
</evidence>
<evidence type="ECO:0000269" key="5">
    <source>
    </source>
</evidence>
<evidence type="ECO:0000269" key="6">
    <source>
    </source>
</evidence>
<evidence type="ECO:0000269" key="7">
    <source>
    </source>
</evidence>
<evidence type="ECO:0000269" key="8">
    <source>
    </source>
</evidence>
<evidence type="ECO:0000269" key="9">
    <source>
    </source>
</evidence>
<evidence type="ECO:0000269" key="10">
    <source ref="1"/>
</evidence>
<evidence type="ECO:0000303" key="11">
    <source>
    </source>
</evidence>
<evidence type="ECO:0000303" key="12">
    <source>
    </source>
</evidence>
<evidence type="ECO:0000303" key="13">
    <source>
    </source>
</evidence>
<evidence type="ECO:0000303" key="14">
    <source ref="1"/>
</evidence>
<evidence type="ECO:0000305" key="15"/>
<feature type="signal peptide" evidence="5">
    <location>
        <begin position="1"/>
        <end position="21"/>
    </location>
</feature>
<feature type="chain" id="PRO_0000280347" description="Phosphoinositide-3-kinase-interacting protein 1">
    <location>
        <begin position="22"/>
        <end position="263"/>
    </location>
</feature>
<feature type="topological domain" description="Extracellular" evidence="2">
    <location>
        <begin position="22"/>
        <end position="168"/>
    </location>
</feature>
<feature type="transmembrane region" description="Helical" evidence="2">
    <location>
        <begin position="169"/>
        <end position="189"/>
    </location>
</feature>
<feature type="topological domain" description="Cytoplasmic" evidence="2">
    <location>
        <begin position="190"/>
        <end position="263"/>
    </location>
</feature>
<feature type="domain" description="Kringle" evidence="3">
    <location>
        <begin position="24"/>
        <end position="101"/>
    </location>
</feature>
<feature type="region of interest" description="Disordered" evidence="4">
    <location>
        <begin position="242"/>
        <end position="263"/>
    </location>
</feature>
<feature type="compositionally biased region" description="Polar residues" evidence="4">
    <location>
        <begin position="242"/>
        <end position="251"/>
    </location>
</feature>
<feature type="glycosylation site" description="O-linked (GalNAc...) serine" evidence="9">
    <location>
        <position position="39"/>
    </location>
</feature>
<feature type="glycosylation site" description="N-linked (GlcNAc...) (complex) asparagine" evidence="9">
    <location>
        <position position="66"/>
    </location>
</feature>
<feature type="disulfide bond" evidence="3">
    <location>
        <begin position="25"/>
        <end position="101"/>
    </location>
</feature>
<feature type="disulfide bond" evidence="3">
    <location>
        <begin position="46"/>
        <end position="82"/>
    </location>
</feature>
<feature type="disulfide bond" evidence="3">
    <location>
        <begin position="70"/>
        <end position="96"/>
    </location>
</feature>
<feature type="splice variant" id="VSP_023638" description="In isoform 3." evidence="12">
    <location>
        <begin position="1"/>
        <end position="157"/>
    </location>
</feature>
<feature type="splice variant" id="VSP_053370" description="In isoform 5." evidence="13">
    <location>
        <begin position="24"/>
        <end position="102"/>
    </location>
</feature>
<feature type="splice variant" id="VSP_043368" description="In isoform 4." evidence="11">
    <original>YVLGITMMVIIIAIGAGIILGYSYKRGKDLKEQHDQKVCEREMQRITLPLSAFTNPTCEIVDEKTVVVHTSQTPVDPQEGTTPLMGQAGTPGA</original>
    <variation>GRI</variation>
    <location>
        <begin position="171"/>
        <end position="263"/>
    </location>
</feature>
<feature type="splice variant" id="VSP_023639" description="In isoform 2." evidence="14">
    <original>GKDLKEQHDQKVCEREMQRITLPLSAFTNPTCEIVDEK</original>
    <variation>SVASLLGPLRRRGGRYTKSNFVAFLPKRKQDVENQLKM</variation>
    <location>
        <begin position="197"/>
        <end position="234"/>
    </location>
</feature>
<feature type="splice variant" id="VSP_023640" description="In isoform 2." evidence="14">
    <location>
        <begin position="235"/>
        <end position="263"/>
    </location>
</feature>
<feature type="sequence variant" id="VAR_031121" description="In dbSNP:rs2040533." evidence="6 7 10">
    <original>T</original>
    <variation>S</variation>
    <location>
        <position position="251"/>
    </location>
</feature>
<feature type="sequence conflict" description="In Ref. 4; BAC11140." evidence="15" ref="4">
    <original>D</original>
    <variation>G</variation>
    <location>
        <position position="98"/>
    </location>
</feature>
<feature type="sequence conflict" description="In Ref. 4; BAC11140." evidence="15" ref="4">
    <original>E</original>
    <variation>G</variation>
    <location>
        <position position="162"/>
    </location>
</feature>
<gene>
    <name type="primary">PIK3IP1</name>
    <name type="synonym">HGFL</name>
</gene>
<keyword id="KW-0025">Alternative splicing</keyword>
<keyword id="KW-1003">Cell membrane</keyword>
<keyword id="KW-0903">Direct protein sequencing</keyword>
<keyword id="KW-1015">Disulfide bond</keyword>
<keyword id="KW-0325">Glycoprotein</keyword>
<keyword id="KW-0420">Kringle</keyword>
<keyword id="KW-0472">Membrane</keyword>
<keyword id="KW-1267">Proteomics identification</keyword>
<keyword id="KW-1185">Reference proteome</keyword>
<keyword id="KW-0732">Signal</keyword>
<keyword id="KW-0812">Transmembrane</keyword>
<keyword id="KW-1133">Transmembrane helix</keyword>
<reference key="1">
    <citation type="submission" date="2002-07" db="EMBL/GenBank/DDBJ databases">
        <authorList>
            <person name="Chiang H."/>
            <person name="Chang M."/>
        </authorList>
    </citation>
    <scope>NUCLEOTIDE SEQUENCE [MRNA] (ISOFORMS 1 AND 2)</scope>
    <scope>VARIANT SER-251</scope>
</reference>
<reference key="2">
    <citation type="journal article" date="2008" name="Beijing Da Xue Xue Bao">
        <title>Both PIK3IP1 and its novel found splicing isoform, PIK3IP1-v1, are located on cell membrane and induce cell apoptosis.</title>
        <authorList>
            <person name="Gao P."/>
            <person name="Zeng W.T."/>
            <person name="Deng W.W."/>
            <person name="Li N."/>
            <person name="Shi T.P."/>
            <person name="Ma D."/>
        </authorList>
    </citation>
    <scope>NUCLEOTIDE SEQUENCE [MRNA] (ISOFORM 5)</scope>
    <scope>SUBCELLULAR LOCATION</scope>
</reference>
<reference key="3">
    <citation type="journal article" date="2004" name="Genome Biol.">
        <title>A genome annotation-driven approach to cloning the human ORFeome.</title>
        <authorList>
            <person name="Collins J.E."/>
            <person name="Wright C.L."/>
            <person name="Edwards C.A."/>
            <person name="Davis M.P."/>
            <person name="Grinham J.A."/>
            <person name="Cole C.G."/>
            <person name="Goward M.E."/>
            <person name="Aguado B."/>
            <person name="Mallya M."/>
            <person name="Mokrab Y."/>
            <person name="Huckle E.J."/>
            <person name="Beare D.M."/>
            <person name="Dunham I."/>
        </authorList>
    </citation>
    <scope>NUCLEOTIDE SEQUENCE [LARGE SCALE MRNA] (ISOFORM 1)</scope>
    <scope>VARIANT SER-251</scope>
</reference>
<reference key="4">
    <citation type="journal article" date="2004" name="Nat. Genet.">
        <title>Complete sequencing and characterization of 21,243 full-length human cDNAs.</title>
        <authorList>
            <person name="Ota T."/>
            <person name="Suzuki Y."/>
            <person name="Nishikawa T."/>
            <person name="Otsuki T."/>
            <person name="Sugiyama T."/>
            <person name="Irie R."/>
            <person name="Wakamatsu A."/>
            <person name="Hayashi K."/>
            <person name="Sato H."/>
            <person name="Nagai K."/>
            <person name="Kimura K."/>
            <person name="Makita H."/>
            <person name="Sekine M."/>
            <person name="Obayashi M."/>
            <person name="Nishi T."/>
            <person name="Shibahara T."/>
            <person name="Tanaka T."/>
            <person name="Ishii S."/>
            <person name="Yamamoto J."/>
            <person name="Saito K."/>
            <person name="Kawai Y."/>
            <person name="Isono Y."/>
            <person name="Nakamura Y."/>
            <person name="Nagahari K."/>
            <person name="Murakami K."/>
            <person name="Yasuda T."/>
            <person name="Iwayanagi T."/>
            <person name="Wagatsuma M."/>
            <person name="Shiratori A."/>
            <person name="Sudo H."/>
            <person name="Hosoiri T."/>
            <person name="Kaku Y."/>
            <person name="Kodaira H."/>
            <person name="Kondo H."/>
            <person name="Sugawara M."/>
            <person name="Takahashi M."/>
            <person name="Kanda K."/>
            <person name="Yokoi T."/>
            <person name="Furuya T."/>
            <person name="Kikkawa E."/>
            <person name="Omura Y."/>
            <person name="Abe K."/>
            <person name="Kamihara K."/>
            <person name="Katsuta N."/>
            <person name="Sato K."/>
            <person name="Tanikawa M."/>
            <person name="Yamazaki M."/>
            <person name="Ninomiya K."/>
            <person name="Ishibashi T."/>
            <person name="Yamashita H."/>
            <person name="Murakawa K."/>
            <person name="Fujimori K."/>
            <person name="Tanai H."/>
            <person name="Kimata M."/>
            <person name="Watanabe M."/>
            <person name="Hiraoka S."/>
            <person name="Chiba Y."/>
            <person name="Ishida S."/>
            <person name="Ono Y."/>
            <person name="Takiguchi S."/>
            <person name="Watanabe S."/>
            <person name="Yosida M."/>
            <person name="Hotuta T."/>
            <person name="Kusano J."/>
            <person name="Kanehori K."/>
            <person name="Takahashi-Fujii A."/>
            <person name="Hara H."/>
            <person name="Tanase T.-O."/>
            <person name="Nomura Y."/>
            <person name="Togiya S."/>
            <person name="Komai F."/>
            <person name="Hara R."/>
            <person name="Takeuchi K."/>
            <person name="Arita M."/>
            <person name="Imose N."/>
            <person name="Musashino K."/>
            <person name="Yuuki H."/>
            <person name="Oshima A."/>
            <person name="Sasaki N."/>
            <person name="Aotsuka S."/>
            <person name="Yoshikawa Y."/>
            <person name="Matsunawa H."/>
            <person name="Ichihara T."/>
            <person name="Shiohata N."/>
            <person name="Sano S."/>
            <person name="Moriya S."/>
            <person name="Momiyama H."/>
            <person name="Satoh N."/>
            <person name="Takami S."/>
            <person name="Terashima Y."/>
            <person name="Suzuki O."/>
            <person name="Nakagawa S."/>
            <person name="Senoh A."/>
            <person name="Mizoguchi H."/>
            <person name="Goto Y."/>
            <person name="Shimizu F."/>
            <person name="Wakebe H."/>
            <person name="Hishigaki H."/>
            <person name="Watanabe T."/>
            <person name="Sugiyama A."/>
            <person name="Takemoto M."/>
            <person name="Kawakami B."/>
            <person name="Yamazaki M."/>
            <person name="Watanabe K."/>
            <person name="Kumagai A."/>
            <person name="Itakura S."/>
            <person name="Fukuzumi Y."/>
            <person name="Fujimori Y."/>
            <person name="Komiyama M."/>
            <person name="Tashiro H."/>
            <person name="Tanigami A."/>
            <person name="Fujiwara T."/>
            <person name="Ono T."/>
            <person name="Yamada K."/>
            <person name="Fujii Y."/>
            <person name="Ozaki K."/>
            <person name="Hirao M."/>
            <person name="Ohmori Y."/>
            <person name="Kawabata A."/>
            <person name="Hikiji T."/>
            <person name="Kobatake N."/>
            <person name="Inagaki H."/>
            <person name="Ikema Y."/>
            <person name="Okamoto S."/>
            <person name="Okitani R."/>
            <person name="Kawakami T."/>
            <person name="Noguchi S."/>
            <person name="Itoh T."/>
            <person name="Shigeta K."/>
            <person name="Senba T."/>
            <person name="Matsumura K."/>
            <person name="Nakajima Y."/>
            <person name="Mizuno T."/>
            <person name="Morinaga M."/>
            <person name="Sasaki M."/>
            <person name="Togashi T."/>
            <person name="Oyama M."/>
            <person name="Hata H."/>
            <person name="Watanabe M."/>
            <person name="Komatsu T."/>
            <person name="Mizushima-Sugano J."/>
            <person name="Satoh T."/>
            <person name="Shirai Y."/>
            <person name="Takahashi Y."/>
            <person name="Nakagawa K."/>
            <person name="Okumura K."/>
            <person name="Nagase T."/>
            <person name="Nomura N."/>
            <person name="Kikuchi H."/>
            <person name="Masuho Y."/>
            <person name="Yamashita R."/>
            <person name="Nakai K."/>
            <person name="Yada T."/>
            <person name="Nakamura Y."/>
            <person name="Ohara O."/>
            <person name="Isogai T."/>
            <person name="Sugano S."/>
        </authorList>
    </citation>
    <scope>NUCLEOTIDE SEQUENCE [LARGE SCALE MRNA] (ISOFORMS 1 AND 4)</scope>
    <source>
        <tissue>Mammary gland</tissue>
        <tissue>Tongue</tissue>
    </source>
</reference>
<reference key="5">
    <citation type="journal article" date="1999" name="Nature">
        <title>The DNA sequence of human chromosome 22.</title>
        <authorList>
            <person name="Dunham I."/>
            <person name="Hunt A.R."/>
            <person name="Collins J.E."/>
            <person name="Bruskiewich R."/>
            <person name="Beare D.M."/>
            <person name="Clamp M."/>
            <person name="Smink L.J."/>
            <person name="Ainscough R."/>
            <person name="Almeida J.P."/>
            <person name="Babbage A.K."/>
            <person name="Bagguley C."/>
            <person name="Bailey J."/>
            <person name="Barlow K.F."/>
            <person name="Bates K.N."/>
            <person name="Beasley O.P."/>
            <person name="Bird C.P."/>
            <person name="Blakey S.E."/>
            <person name="Bridgeman A.M."/>
            <person name="Buck D."/>
            <person name="Burgess J."/>
            <person name="Burrill W.D."/>
            <person name="Burton J."/>
            <person name="Carder C."/>
            <person name="Carter N.P."/>
            <person name="Chen Y."/>
            <person name="Clark G."/>
            <person name="Clegg S.M."/>
            <person name="Cobley V.E."/>
            <person name="Cole C.G."/>
            <person name="Collier R.E."/>
            <person name="Connor R."/>
            <person name="Conroy D."/>
            <person name="Corby N.R."/>
            <person name="Coville G.J."/>
            <person name="Cox A.V."/>
            <person name="Davis J."/>
            <person name="Dawson E."/>
            <person name="Dhami P.D."/>
            <person name="Dockree C."/>
            <person name="Dodsworth S.J."/>
            <person name="Durbin R.M."/>
            <person name="Ellington A.G."/>
            <person name="Evans K.L."/>
            <person name="Fey J.M."/>
            <person name="Fleming K."/>
            <person name="French L."/>
            <person name="Garner A.A."/>
            <person name="Gilbert J.G.R."/>
            <person name="Goward M.E."/>
            <person name="Grafham D.V."/>
            <person name="Griffiths M.N.D."/>
            <person name="Hall C."/>
            <person name="Hall R.E."/>
            <person name="Hall-Tamlyn G."/>
            <person name="Heathcott R.W."/>
            <person name="Ho S."/>
            <person name="Holmes S."/>
            <person name="Hunt S.E."/>
            <person name="Jones M.C."/>
            <person name="Kershaw J."/>
            <person name="Kimberley A.M."/>
            <person name="King A."/>
            <person name="Laird G.K."/>
            <person name="Langford C.F."/>
            <person name="Leversha M.A."/>
            <person name="Lloyd C."/>
            <person name="Lloyd D.M."/>
            <person name="Martyn I.D."/>
            <person name="Mashreghi-Mohammadi M."/>
            <person name="Matthews L.H."/>
            <person name="Mccann O.T."/>
            <person name="Mcclay J."/>
            <person name="Mclaren S."/>
            <person name="McMurray A.A."/>
            <person name="Milne S.A."/>
            <person name="Mortimore B.J."/>
            <person name="Odell C.N."/>
            <person name="Pavitt R."/>
            <person name="Pearce A.V."/>
            <person name="Pearson D."/>
            <person name="Phillimore B.J.C.T."/>
            <person name="Phillips S.H."/>
            <person name="Plumb R.W."/>
            <person name="Ramsay H."/>
            <person name="Ramsey Y."/>
            <person name="Rogers L."/>
            <person name="Ross M.T."/>
            <person name="Scott C.E."/>
            <person name="Sehra H.K."/>
            <person name="Skuce C.D."/>
            <person name="Smalley S."/>
            <person name="Smith M.L."/>
            <person name="Soderlund C."/>
            <person name="Spragon L."/>
            <person name="Steward C.A."/>
            <person name="Sulston J.E."/>
            <person name="Swann R.M."/>
            <person name="Vaudin M."/>
            <person name="Wall M."/>
            <person name="Wallis J.M."/>
            <person name="Whiteley M.N."/>
            <person name="Willey D.L."/>
            <person name="Williams L."/>
            <person name="Williams S.A."/>
            <person name="Williamson H."/>
            <person name="Wilmer T.E."/>
            <person name="Wilming L."/>
            <person name="Wright C.L."/>
            <person name="Hubbard T."/>
            <person name="Bentley D.R."/>
            <person name="Beck S."/>
            <person name="Rogers J."/>
            <person name="Shimizu N."/>
            <person name="Minoshima S."/>
            <person name="Kawasaki K."/>
            <person name="Sasaki T."/>
            <person name="Asakawa S."/>
            <person name="Kudoh J."/>
            <person name="Shintani A."/>
            <person name="Shibuya K."/>
            <person name="Yoshizaki Y."/>
            <person name="Aoki N."/>
            <person name="Mitsuyama S."/>
            <person name="Roe B.A."/>
            <person name="Chen F."/>
            <person name="Chu L."/>
            <person name="Crabtree J."/>
            <person name="Deschamps S."/>
            <person name="Do A."/>
            <person name="Do T."/>
            <person name="Dorman A."/>
            <person name="Fang F."/>
            <person name="Fu Y."/>
            <person name="Hu P."/>
            <person name="Hua A."/>
            <person name="Kenton S."/>
            <person name="Lai H."/>
            <person name="Lao H.I."/>
            <person name="Lewis J."/>
            <person name="Lewis S."/>
            <person name="Lin S.-P."/>
            <person name="Loh P."/>
            <person name="Malaj E."/>
            <person name="Nguyen T."/>
            <person name="Pan H."/>
            <person name="Phan S."/>
            <person name="Qi S."/>
            <person name="Qian Y."/>
            <person name="Ray L."/>
            <person name="Ren Q."/>
            <person name="Shaull S."/>
            <person name="Sloan D."/>
            <person name="Song L."/>
            <person name="Wang Q."/>
            <person name="Wang Y."/>
            <person name="Wang Z."/>
            <person name="White J."/>
            <person name="Willingham D."/>
            <person name="Wu H."/>
            <person name="Yao Z."/>
            <person name="Zhan M."/>
            <person name="Zhang G."/>
            <person name="Chissoe S."/>
            <person name="Murray J."/>
            <person name="Miller N."/>
            <person name="Minx P."/>
            <person name="Fulton R."/>
            <person name="Johnson D."/>
            <person name="Bemis G."/>
            <person name="Bentley D."/>
            <person name="Bradshaw H."/>
            <person name="Bourne S."/>
            <person name="Cordes M."/>
            <person name="Du Z."/>
            <person name="Fulton L."/>
            <person name="Goela D."/>
            <person name="Graves T."/>
            <person name="Hawkins J."/>
            <person name="Hinds K."/>
            <person name="Kemp K."/>
            <person name="Latreille P."/>
            <person name="Layman D."/>
            <person name="Ozersky P."/>
            <person name="Rohlfing T."/>
            <person name="Scheet P."/>
            <person name="Walker C."/>
            <person name="Wamsley A."/>
            <person name="Wohldmann P."/>
            <person name="Pepin K."/>
            <person name="Nelson J."/>
            <person name="Korf I."/>
            <person name="Bedell J.A."/>
            <person name="Hillier L.W."/>
            <person name="Mardis E."/>
            <person name="Waterston R."/>
            <person name="Wilson R."/>
            <person name="Emanuel B.S."/>
            <person name="Shaikh T."/>
            <person name="Kurahashi H."/>
            <person name="Saitta S."/>
            <person name="Budarf M.L."/>
            <person name="McDermid H.E."/>
            <person name="Johnson A."/>
            <person name="Wong A.C.C."/>
            <person name="Morrow B.E."/>
            <person name="Edelmann L."/>
            <person name="Kim U.J."/>
            <person name="Shizuya H."/>
            <person name="Simon M.I."/>
            <person name="Dumanski J.P."/>
            <person name="Peyrard M."/>
            <person name="Kedra D."/>
            <person name="Seroussi E."/>
            <person name="Fransson I."/>
            <person name="Tapia I."/>
            <person name="Bruder C.E."/>
            <person name="O'Brien K.P."/>
            <person name="Wilkinson P."/>
            <person name="Bodenteich A."/>
            <person name="Hartman K."/>
            <person name="Hu X."/>
            <person name="Khan A.S."/>
            <person name="Lane L."/>
            <person name="Tilahun Y."/>
            <person name="Wright H."/>
        </authorList>
    </citation>
    <scope>NUCLEOTIDE SEQUENCE [LARGE SCALE GENOMIC DNA]</scope>
</reference>
<reference key="6">
    <citation type="submission" date="2005-07" db="EMBL/GenBank/DDBJ databases">
        <authorList>
            <person name="Mural R.J."/>
            <person name="Istrail S."/>
            <person name="Sutton G."/>
            <person name="Florea L."/>
            <person name="Halpern A.L."/>
            <person name="Mobarry C.M."/>
            <person name="Lippert R."/>
            <person name="Walenz B."/>
            <person name="Shatkay H."/>
            <person name="Dew I."/>
            <person name="Miller J.R."/>
            <person name="Flanigan M.J."/>
            <person name="Edwards N.J."/>
            <person name="Bolanos R."/>
            <person name="Fasulo D."/>
            <person name="Halldorsson B.V."/>
            <person name="Hannenhalli S."/>
            <person name="Turner R."/>
            <person name="Yooseph S."/>
            <person name="Lu F."/>
            <person name="Nusskern D.R."/>
            <person name="Shue B.C."/>
            <person name="Zheng X.H."/>
            <person name="Zhong F."/>
            <person name="Delcher A.L."/>
            <person name="Huson D.H."/>
            <person name="Kravitz S.A."/>
            <person name="Mouchard L."/>
            <person name="Reinert K."/>
            <person name="Remington K.A."/>
            <person name="Clark A.G."/>
            <person name="Waterman M.S."/>
            <person name="Eichler E.E."/>
            <person name="Adams M.D."/>
            <person name="Hunkapiller M.W."/>
            <person name="Myers E.W."/>
            <person name="Venter J.C."/>
        </authorList>
    </citation>
    <scope>NUCLEOTIDE SEQUENCE [LARGE SCALE GENOMIC DNA]</scope>
</reference>
<reference key="7">
    <citation type="journal article" date="2004" name="Genome Res.">
        <title>The status, quality, and expansion of the NIH full-length cDNA project: the Mammalian Gene Collection (MGC).</title>
        <authorList>
            <consortium name="The MGC Project Team"/>
        </authorList>
    </citation>
    <scope>NUCLEOTIDE SEQUENCE [LARGE SCALE MRNA] (ISOFORMS 1 AND 3)</scope>
    <scope>VARIANT SER-251</scope>
    <source>
        <tissue>Brain</tissue>
    </source>
</reference>
<reference key="8">
    <citation type="journal article" date="2004" name="Protein Sci.">
        <title>Signal peptide prediction based on analysis of experimentally verified cleavage sites.</title>
        <authorList>
            <person name="Zhang Z."/>
            <person name="Henzel W.J."/>
        </authorList>
    </citation>
    <scope>PROTEIN SEQUENCE OF 22-36</scope>
</reference>
<reference key="9">
    <citation type="journal article" date="2012" name="Mol. Cell. Proteomics">
        <title>Human urinary glycoproteomics; attachment site specific analysis of N- and O-linked glycosylations by CID and ECD.</title>
        <authorList>
            <person name="Halim A."/>
            <person name="Nilsson J."/>
            <person name="Ruetschi U."/>
            <person name="Hesse C."/>
            <person name="Larson G."/>
        </authorList>
    </citation>
    <scope>GLYCOSYLATION AT SER-39 AND ASN-66</scope>
    <scope>STRUCTURE OF CARBOHYDRATES</scope>
    <scope>IDENTIFICATION BY MASS SPECTROMETRY</scope>
</reference>
<dbReference type="EMBL" id="AF528079">
    <property type="protein sequence ID" value="AAO33762.1"/>
    <property type="molecule type" value="mRNA"/>
</dbReference>
<dbReference type="EMBL" id="AF528080">
    <property type="protein sequence ID" value="AAO33763.1"/>
    <property type="molecule type" value="mRNA"/>
</dbReference>
<dbReference type="EMBL" id="GU135609">
    <property type="protein sequence ID" value="ACZ26468.1"/>
    <property type="molecule type" value="mRNA"/>
</dbReference>
<dbReference type="EMBL" id="CR456340">
    <property type="protein sequence ID" value="CAG30226.1"/>
    <property type="molecule type" value="mRNA"/>
</dbReference>
<dbReference type="EMBL" id="AK074688">
    <property type="protein sequence ID" value="BAC11140.1"/>
    <property type="molecule type" value="mRNA"/>
</dbReference>
<dbReference type="EMBL" id="AK299397">
    <property type="protein sequence ID" value="BAG61381.1"/>
    <property type="molecule type" value="mRNA"/>
</dbReference>
<dbReference type="EMBL" id="AC002073">
    <property type="protein sequence ID" value="AAB54054.1"/>
    <property type="molecule type" value="Genomic_DNA"/>
</dbReference>
<dbReference type="EMBL" id="CH471095">
    <property type="protein sequence ID" value="EAW59962.1"/>
    <property type="molecule type" value="Genomic_DNA"/>
</dbReference>
<dbReference type="EMBL" id="BC011049">
    <property type="protein sequence ID" value="AAH11049.1"/>
    <property type="molecule type" value="mRNA"/>
</dbReference>
<dbReference type="EMBL" id="BC041903">
    <property type="protein sequence ID" value="AAH41903.1"/>
    <property type="molecule type" value="mRNA"/>
</dbReference>
<dbReference type="CCDS" id="CCDS13893.1">
    <molecule id="Q96FE7-1"/>
</dbReference>
<dbReference type="CCDS" id="CCDS46690.1">
    <molecule id="Q96FE7-4"/>
</dbReference>
<dbReference type="RefSeq" id="NP_001129383.1">
    <molecule id="Q96FE7-4"/>
    <property type="nucleotide sequence ID" value="NM_001135911.1"/>
</dbReference>
<dbReference type="RefSeq" id="NP_443112.2">
    <molecule id="Q96FE7-1"/>
    <property type="nucleotide sequence ID" value="NM_052880.5"/>
</dbReference>
<dbReference type="SMR" id="Q96FE7"/>
<dbReference type="BioGRID" id="125260">
    <property type="interactions" value="21"/>
</dbReference>
<dbReference type="FunCoup" id="Q96FE7">
    <property type="interactions" value="315"/>
</dbReference>
<dbReference type="IntAct" id="Q96FE7">
    <property type="interactions" value="20"/>
</dbReference>
<dbReference type="STRING" id="9606.ENSP00000215912"/>
<dbReference type="GlyConnect" id="686">
    <property type="glycosylation" value="11 N-Linked glycans (1 site), 5 O-Linked glycans (3 sites)"/>
</dbReference>
<dbReference type="GlyCosmos" id="Q96FE7">
    <property type="glycosylation" value="4 sites, 17 glycans"/>
</dbReference>
<dbReference type="GlyGen" id="Q96FE7">
    <property type="glycosylation" value="8 sites, 13 N-linked glycans (1 site), 7 O-linked glycans (5 sites)"/>
</dbReference>
<dbReference type="iPTMnet" id="Q96FE7"/>
<dbReference type="PhosphoSitePlus" id="Q96FE7"/>
<dbReference type="BioMuta" id="PIK3IP1"/>
<dbReference type="DMDM" id="134034149"/>
<dbReference type="jPOST" id="Q96FE7"/>
<dbReference type="MassIVE" id="Q96FE7"/>
<dbReference type="PaxDb" id="9606-ENSP00000215912"/>
<dbReference type="PeptideAtlas" id="Q96FE7"/>
<dbReference type="ProteomicsDB" id="12726"/>
<dbReference type="ProteomicsDB" id="76518">
    <molecule id="Q96FE7-1"/>
</dbReference>
<dbReference type="ProteomicsDB" id="76519">
    <molecule id="Q96FE7-2"/>
</dbReference>
<dbReference type="ProteomicsDB" id="76520">
    <molecule id="Q96FE7-3"/>
</dbReference>
<dbReference type="ProteomicsDB" id="76521">
    <molecule id="Q96FE7-4"/>
</dbReference>
<dbReference type="Antibodypedia" id="1229">
    <property type="antibodies" value="134 antibodies from 23 providers"/>
</dbReference>
<dbReference type="DNASU" id="113791"/>
<dbReference type="Ensembl" id="ENST00000215912.10">
    <molecule id="Q96FE7-1"/>
    <property type="protein sequence ID" value="ENSP00000215912.4"/>
    <property type="gene ID" value="ENSG00000100100.14"/>
</dbReference>
<dbReference type="Ensembl" id="ENST00000402249.7">
    <molecule id="Q96FE7-2"/>
    <property type="protein sequence ID" value="ENSP00000385204.3"/>
    <property type="gene ID" value="ENSG00000100100.14"/>
</dbReference>
<dbReference type="Ensembl" id="ENST00000441972.5">
    <molecule id="Q96FE7-4"/>
    <property type="protein sequence ID" value="ENSP00000415608.1"/>
    <property type="gene ID" value="ENSG00000100100.14"/>
</dbReference>
<dbReference type="GeneID" id="113791"/>
<dbReference type="KEGG" id="hsa:113791"/>
<dbReference type="MANE-Select" id="ENST00000215912.10">
    <property type="protein sequence ID" value="ENSP00000215912.4"/>
    <property type="RefSeq nucleotide sequence ID" value="NM_052880.5"/>
    <property type="RefSeq protein sequence ID" value="NP_443112.2"/>
</dbReference>
<dbReference type="UCSC" id="uc003akm.4">
    <molecule id="Q96FE7-1"/>
    <property type="organism name" value="human"/>
</dbReference>
<dbReference type="AGR" id="HGNC:24942"/>
<dbReference type="CTD" id="113791"/>
<dbReference type="DisGeNET" id="113791"/>
<dbReference type="GeneCards" id="PIK3IP1"/>
<dbReference type="HGNC" id="HGNC:24942">
    <property type="gene designation" value="PIK3IP1"/>
</dbReference>
<dbReference type="HPA" id="ENSG00000100100">
    <property type="expression patterns" value="Low tissue specificity"/>
</dbReference>
<dbReference type="MIM" id="619158">
    <property type="type" value="gene"/>
</dbReference>
<dbReference type="neXtProt" id="NX_Q96FE7"/>
<dbReference type="OpenTargets" id="ENSG00000100100"/>
<dbReference type="PharmGKB" id="PA162399553"/>
<dbReference type="VEuPathDB" id="HostDB:ENSG00000100100"/>
<dbReference type="eggNOG" id="ENOG502QTWD">
    <property type="taxonomic scope" value="Eukaryota"/>
</dbReference>
<dbReference type="GeneTree" id="ENSGT00390000017774"/>
<dbReference type="HOGENOM" id="CLU_092099_0_0_1"/>
<dbReference type="InParanoid" id="Q96FE7"/>
<dbReference type="OMA" id="HDQKVCE"/>
<dbReference type="OrthoDB" id="9893972at2759"/>
<dbReference type="PAN-GO" id="Q96FE7">
    <property type="GO annotations" value="3 GO annotations based on evolutionary models"/>
</dbReference>
<dbReference type="PhylomeDB" id="Q96FE7"/>
<dbReference type="TreeFam" id="TF331319"/>
<dbReference type="PathwayCommons" id="Q96FE7"/>
<dbReference type="SignaLink" id="Q96FE7"/>
<dbReference type="SIGNOR" id="Q96FE7"/>
<dbReference type="BioGRID-ORCS" id="113791">
    <property type="hits" value="19 hits in 1154 CRISPR screens"/>
</dbReference>
<dbReference type="ChiTaRS" id="PIK3IP1">
    <property type="organism name" value="human"/>
</dbReference>
<dbReference type="GeneWiki" id="PIK3IP1"/>
<dbReference type="GenomeRNAi" id="113791"/>
<dbReference type="Pharos" id="Q96FE7">
    <property type="development level" value="Tbio"/>
</dbReference>
<dbReference type="PRO" id="PR:Q96FE7"/>
<dbReference type="Proteomes" id="UP000005640">
    <property type="component" value="Chromosome 22"/>
</dbReference>
<dbReference type="RNAct" id="Q96FE7">
    <property type="molecule type" value="protein"/>
</dbReference>
<dbReference type="Bgee" id="ENSG00000100100">
    <property type="expression patterns" value="Expressed in lymph node and 196 other cell types or tissues"/>
</dbReference>
<dbReference type="ExpressionAtlas" id="Q96FE7">
    <property type="expression patterns" value="baseline and differential"/>
</dbReference>
<dbReference type="GO" id="GO:0005615">
    <property type="term" value="C:extracellular space"/>
    <property type="evidence" value="ECO:0000318"/>
    <property type="project" value="GO_Central"/>
</dbReference>
<dbReference type="GO" id="GO:0005886">
    <property type="term" value="C:plasma membrane"/>
    <property type="evidence" value="ECO:0007669"/>
    <property type="project" value="UniProtKB-SubCell"/>
</dbReference>
<dbReference type="GO" id="GO:0004175">
    <property type="term" value="F:endopeptidase activity"/>
    <property type="evidence" value="ECO:0000318"/>
    <property type="project" value="GO_Central"/>
</dbReference>
<dbReference type="GO" id="GO:0141039">
    <property type="term" value="F:phosphatidylinositol 3-kinase inhibitor activity"/>
    <property type="evidence" value="ECO:0000353"/>
    <property type="project" value="UniProtKB"/>
</dbReference>
<dbReference type="GO" id="GO:0005102">
    <property type="term" value="F:signaling receptor binding"/>
    <property type="evidence" value="ECO:0000318"/>
    <property type="project" value="GO_Central"/>
</dbReference>
<dbReference type="GO" id="GO:0051898">
    <property type="term" value="P:negative regulation of phosphatidylinositol 3-kinase/protein kinase B signal transduction"/>
    <property type="evidence" value="ECO:0000314"/>
    <property type="project" value="UniProtKB"/>
</dbReference>
<dbReference type="CDD" id="cd00108">
    <property type="entry name" value="KR"/>
    <property type="match status" value="1"/>
</dbReference>
<dbReference type="FunFam" id="2.40.20.10:FF:000012">
    <property type="entry name" value="Phosphoinositide-3-kinase-interacting protein 1"/>
    <property type="match status" value="1"/>
</dbReference>
<dbReference type="Gene3D" id="2.40.20.10">
    <property type="entry name" value="Plasminogen Kringle 4"/>
    <property type="match status" value="1"/>
</dbReference>
<dbReference type="InterPro" id="IPR000001">
    <property type="entry name" value="Kringle"/>
</dbReference>
<dbReference type="InterPro" id="IPR013806">
    <property type="entry name" value="Kringle-like"/>
</dbReference>
<dbReference type="InterPro" id="IPR018056">
    <property type="entry name" value="Kringle_CS"/>
</dbReference>
<dbReference type="InterPro" id="IPR038178">
    <property type="entry name" value="Kringle_sf"/>
</dbReference>
<dbReference type="Pfam" id="PF00051">
    <property type="entry name" value="Kringle"/>
    <property type="match status" value="1"/>
</dbReference>
<dbReference type="SMART" id="SM00130">
    <property type="entry name" value="KR"/>
    <property type="match status" value="1"/>
</dbReference>
<dbReference type="SUPFAM" id="SSF57440">
    <property type="entry name" value="Kringle-like"/>
    <property type="match status" value="1"/>
</dbReference>
<dbReference type="PROSITE" id="PS00021">
    <property type="entry name" value="KRINGLE_1"/>
    <property type="match status" value="1"/>
</dbReference>
<dbReference type="PROSITE" id="PS50070">
    <property type="entry name" value="KRINGLE_2"/>
    <property type="match status" value="1"/>
</dbReference>
<organism>
    <name type="scientific">Homo sapiens</name>
    <name type="common">Human</name>
    <dbReference type="NCBI Taxonomy" id="9606"/>
    <lineage>
        <taxon>Eukaryota</taxon>
        <taxon>Metazoa</taxon>
        <taxon>Chordata</taxon>
        <taxon>Craniata</taxon>
        <taxon>Vertebrata</taxon>
        <taxon>Euteleostomi</taxon>
        <taxon>Mammalia</taxon>
        <taxon>Eutheria</taxon>
        <taxon>Euarchontoglires</taxon>
        <taxon>Primates</taxon>
        <taxon>Haplorrhini</taxon>
        <taxon>Catarrhini</taxon>
        <taxon>Hominidae</taxon>
        <taxon>Homo</taxon>
    </lineage>
</organism>
<protein>
    <recommendedName>
        <fullName>Phosphoinositide-3-kinase-interacting protein 1</fullName>
        <shortName>PI3K-interacting protein 1</shortName>
    </recommendedName>
    <alternativeName>
        <fullName>Kringle domain-containing protein HGFL</fullName>
    </alternativeName>
</protein>